<proteinExistence type="inferred from homology"/>
<dbReference type="EC" id="1.6.5.-" evidence="1"/>
<dbReference type="EC" id="1.7.1.17" evidence="1"/>
<dbReference type="EMBL" id="AM167904">
    <property type="protein sequence ID" value="CAJ50514.1"/>
    <property type="molecule type" value="Genomic_DNA"/>
</dbReference>
<dbReference type="RefSeq" id="WP_012418543.1">
    <property type="nucleotide sequence ID" value="NC_010645.1"/>
</dbReference>
<dbReference type="SMR" id="Q2KVB0"/>
<dbReference type="KEGG" id="bav:BAV2904"/>
<dbReference type="eggNOG" id="COG1182">
    <property type="taxonomic scope" value="Bacteria"/>
</dbReference>
<dbReference type="HOGENOM" id="CLU_088964_0_0_4"/>
<dbReference type="OrthoDB" id="9787136at2"/>
<dbReference type="Proteomes" id="UP000001977">
    <property type="component" value="Chromosome"/>
</dbReference>
<dbReference type="GO" id="GO:0009055">
    <property type="term" value="F:electron transfer activity"/>
    <property type="evidence" value="ECO:0007669"/>
    <property type="project" value="UniProtKB-UniRule"/>
</dbReference>
<dbReference type="GO" id="GO:0010181">
    <property type="term" value="F:FMN binding"/>
    <property type="evidence" value="ECO:0007669"/>
    <property type="project" value="UniProtKB-UniRule"/>
</dbReference>
<dbReference type="GO" id="GO:0016652">
    <property type="term" value="F:oxidoreductase activity, acting on NAD(P)H as acceptor"/>
    <property type="evidence" value="ECO:0007669"/>
    <property type="project" value="UniProtKB-UniRule"/>
</dbReference>
<dbReference type="GO" id="GO:0016655">
    <property type="term" value="F:oxidoreductase activity, acting on NAD(P)H, quinone or similar compound as acceptor"/>
    <property type="evidence" value="ECO:0007669"/>
    <property type="project" value="InterPro"/>
</dbReference>
<dbReference type="Gene3D" id="3.40.50.360">
    <property type="match status" value="1"/>
</dbReference>
<dbReference type="HAMAP" id="MF_01216">
    <property type="entry name" value="Azoreductase_type1"/>
    <property type="match status" value="1"/>
</dbReference>
<dbReference type="InterPro" id="IPR003680">
    <property type="entry name" value="Flavodoxin_fold"/>
</dbReference>
<dbReference type="InterPro" id="IPR029039">
    <property type="entry name" value="Flavoprotein-like_sf"/>
</dbReference>
<dbReference type="InterPro" id="IPR050104">
    <property type="entry name" value="FMN-dep_NADH:Q_OxRdtase_AzoR1"/>
</dbReference>
<dbReference type="InterPro" id="IPR023048">
    <property type="entry name" value="NADH:quinone_OxRdtase_FMN_depd"/>
</dbReference>
<dbReference type="PANTHER" id="PTHR43741">
    <property type="entry name" value="FMN-DEPENDENT NADH-AZOREDUCTASE 1"/>
    <property type="match status" value="1"/>
</dbReference>
<dbReference type="PANTHER" id="PTHR43741:SF2">
    <property type="entry name" value="FMN-DEPENDENT NADH:QUINONE OXIDOREDUCTASE"/>
    <property type="match status" value="1"/>
</dbReference>
<dbReference type="Pfam" id="PF02525">
    <property type="entry name" value="Flavodoxin_2"/>
    <property type="match status" value="1"/>
</dbReference>
<dbReference type="SUPFAM" id="SSF52218">
    <property type="entry name" value="Flavoproteins"/>
    <property type="match status" value="1"/>
</dbReference>
<reference key="1">
    <citation type="journal article" date="2006" name="J. Bacteriol.">
        <title>Comparison of the genome sequence of the poultry pathogen Bordetella avium with those of B. bronchiseptica, B. pertussis, and B. parapertussis reveals extensive diversity in surface structures associated with host interaction.</title>
        <authorList>
            <person name="Sebaihia M."/>
            <person name="Preston A."/>
            <person name="Maskell D.J."/>
            <person name="Kuzmiak H."/>
            <person name="Connell T.D."/>
            <person name="King N.D."/>
            <person name="Orndorff P.E."/>
            <person name="Miyamoto D.M."/>
            <person name="Thomson N.R."/>
            <person name="Harris D."/>
            <person name="Goble A."/>
            <person name="Lord A."/>
            <person name="Murphy L."/>
            <person name="Quail M.A."/>
            <person name="Rutter S."/>
            <person name="Squares R."/>
            <person name="Squares S."/>
            <person name="Woodward J."/>
            <person name="Parkhill J."/>
            <person name="Temple L.M."/>
        </authorList>
    </citation>
    <scope>NUCLEOTIDE SEQUENCE [LARGE SCALE GENOMIC DNA]</scope>
    <source>
        <strain>197N</strain>
    </source>
</reference>
<gene>
    <name evidence="1" type="primary">azoR</name>
    <name type="ordered locus">BAV2904</name>
</gene>
<accession>Q2KVB0</accession>
<comment type="function">
    <text evidence="1">Quinone reductase that provides resistance to thiol-specific stress caused by electrophilic quinones.</text>
</comment>
<comment type="function">
    <text evidence="1">Also exhibits azoreductase activity. Catalyzes the reductive cleavage of the azo bond in aromatic azo compounds to the corresponding amines.</text>
</comment>
<comment type="catalytic activity">
    <reaction evidence="1">
        <text>2 a quinone + NADH + H(+) = 2 a 1,4-benzosemiquinone + NAD(+)</text>
        <dbReference type="Rhea" id="RHEA:65952"/>
        <dbReference type="ChEBI" id="CHEBI:15378"/>
        <dbReference type="ChEBI" id="CHEBI:57540"/>
        <dbReference type="ChEBI" id="CHEBI:57945"/>
        <dbReference type="ChEBI" id="CHEBI:132124"/>
        <dbReference type="ChEBI" id="CHEBI:134225"/>
    </reaction>
</comment>
<comment type="catalytic activity">
    <reaction evidence="1">
        <text>N,N-dimethyl-1,4-phenylenediamine + anthranilate + 2 NAD(+) = 2-(4-dimethylaminophenyl)diazenylbenzoate + 2 NADH + 2 H(+)</text>
        <dbReference type="Rhea" id="RHEA:55872"/>
        <dbReference type="ChEBI" id="CHEBI:15378"/>
        <dbReference type="ChEBI" id="CHEBI:15783"/>
        <dbReference type="ChEBI" id="CHEBI:16567"/>
        <dbReference type="ChEBI" id="CHEBI:57540"/>
        <dbReference type="ChEBI" id="CHEBI:57945"/>
        <dbReference type="ChEBI" id="CHEBI:71579"/>
        <dbReference type="EC" id="1.7.1.17"/>
    </reaction>
</comment>
<comment type="cofactor">
    <cofactor evidence="1">
        <name>FMN</name>
        <dbReference type="ChEBI" id="CHEBI:58210"/>
    </cofactor>
    <text evidence="1">Binds 1 FMN per subunit.</text>
</comment>
<comment type="subunit">
    <text evidence="1">Homodimer.</text>
</comment>
<comment type="similarity">
    <text evidence="1">Belongs to the azoreductase type 1 family.</text>
</comment>
<keyword id="KW-0285">Flavoprotein</keyword>
<keyword id="KW-0288">FMN</keyword>
<keyword id="KW-0520">NAD</keyword>
<keyword id="KW-0560">Oxidoreductase</keyword>
<keyword id="KW-1185">Reference proteome</keyword>
<sequence>MKTLVLLSSILGDRSKSKALADHFLARMCEHEPASDITVRDLAAQPVPYFDAETAGALFTPADARSDAQRAIVALSDALIAELQAAERVVFAVPTYNFNLPAQLKSYLDYVARAGITFRYTPEGVPEGLLQGKQVYVLIARGGKALGTPQDSMTPYLKQMLGFLGMQDVTVIAAEGMAMGEFAAAEGLAQAKARIDELLPQLA</sequence>
<protein>
    <recommendedName>
        <fullName evidence="1">FMN-dependent NADH:quinone oxidoreductase</fullName>
        <ecNumber evidence="1">1.6.5.-</ecNumber>
    </recommendedName>
    <alternativeName>
        <fullName evidence="1">Azo-dye reductase</fullName>
    </alternativeName>
    <alternativeName>
        <fullName evidence="1">FMN-dependent NADH-azo compound oxidoreductase</fullName>
    </alternativeName>
    <alternativeName>
        <fullName evidence="1">FMN-dependent NADH-azoreductase</fullName>
        <ecNumber evidence="1">1.7.1.17</ecNumber>
    </alternativeName>
</protein>
<evidence type="ECO:0000255" key="1">
    <source>
        <dbReference type="HAMAP-Rule" id="MF_01216"/>
    </source>
</evidence>
<feature type="chain" id="PRO_0000245894" description="FMN-dependent NADH:quinone oxidoreductase">
    <location>
        <begin position="1"/>
        <end position="203"/>
    </location>
</feature>
<feature type="binding site" evidence="1">
    <location>
        <position position="9"/>
    </location>
    <ligand>
        <name>FMN</name>
        <dbReference type="ChEBI" id="CHEBI:58210"/>
    </ligand>
</feature>
<feature type="binding site" evidence="1">
    <location>
        <begin position="15"/>
        <end position="17"/>
    </location>
    <ligand>
        <name>FMN</name>
        <dbReference type="ChEBI" id="CHEBI:58210"/>
    </ligand>
</feature>
<name>AZOR_BORA1</name>
<organism>
    <name type="scientific">Bordetella avium (strain 197N)</name>
    <dbReference type="NCBI Taxonomy" id="360910"/>
    <lineage>
        <taxon>Bacteria</taxon>
        <taxon>Pseudomonadati</taxon>
        <taxon>Pseudomonadota</taxon>
        <taxon>Betaproteobacteria</taxon>
        <taxon>Burkholderiales</taxon>
        <taxon>Alcaligenaceae</taxon>
        <taxon>Bordetella</taxon>
    </lineage>
</organism>